<name>FAXD2_NOTSC</name>
<proteinExistence type="evidence at protein level"/>
<accession>Q58L94</accession>
<organism>
    <name type="scientific">Notechis scutatus scutatus</name>
    <name type="common">Mainland tiger snake</name>
    <name type="synonym">Common tiger snake</name>
    <dbReference type="NCBI Taxonomy" id="70142"/>
    <lineage>
        <taxon>Eukaryota</taxon>
        <taxon>Metazoa</taxon>
        <taxon>Chordata</taxon>
        <taxon>Craniata</taxon>
        <taxon>Vertebrata</taxon>
        <taxon>Euteleostomi</taxon>
        <taxon>Lepidosauria</taxon>
        <taxon>Squamata</taxon>
        <taxon>Bifurcata</taxon>
        <taxon>Unidentata</taxon>
        <taxon>Episquamata</taxon>
        <taxon>Toxicofera</taxon>
        <taxon>Serpentes</taxon>
        <taxon>Colubroidea</taxon>
        <taxon>Elapidae</taxon>
        <taxon>Hydrophiinae</taxon>
        <taxon>Notechis</taxon>
    </lineage>
</organism>
<comment type="function">
    <text evidence="6">Snake prothrombin activator that attacks the hemostatic system of prey. This protein is functionally similar to blood coagulation factor Xa.</text>
</comment>
<comment type="catalytic activity">
    <reaction>
        <text>Selective cleavage of Arg-|-Thr and then Arg-|-Ile bonds in prothrombin to form thrombin.</text>
        <dbReference type="EC" id="3.4.21.6"/>
    </reaction>
</comment>
<comment type="subunit">
    <text evidence="6">Heterodimer of a light chain and a heavy chain; disulfide-linked.</text>
</comment>
<comment type="subcellular location">
    <subcellularLocation>
        <location evidence="6">Secreted</location>
    </subcellularLocation>
</comment>
<comment type="tissue specificity">
    <text evidence="6">Expressed by the venom gland.</text>
</comment>
<comment type="PTM">
    <text evidence="5 6">Gamma-carboxyglutamate residues are formed by vitamin K dependent carboxylation. These residues are essential for the binding of calcium.</text>
</comment>
<comment type="miscellaneous">
    <text>Is classified in the group D of snake venom prothrombin activators, since it requires the mammalian factor Va for maximal activity for the cleavage of prothrombin. The venom of this species does not contain its own coagulation factor V-like.</text>
</comment>
<comment type="miscellaneous">
    <text>PubMed:12403650 describes 2 isoforms of notecarin D (D1 and D2). We chose to name this protein D1 according to the masses indicated in the paper.</text>
</comment>
<comment type="miscellaneous">
    <text>In contrast to blood coagulation factors that circulate as inactive zymogen in plasma, venom prothrombin activators are always found in the active form in the venom.</text>
</comment>
<comment type="similarity">
    <text evidence="4">Belongs to the peptidase S1 family. Snake venom subfamily.</text>
</comment>
<reference key="1">
    <citation type="journal article" date="2005" name="Mol. Biol. Evol.">
        <title>Comparative analysis of prothrombin activators from the venom of Australian elapids.</title>
        <authorList>
            <person name="St Pierre L."/>
            <person name="Masci P.P."/>
            <person name="Filippovich I."/>
            <person name="Sorokina N."/>
            <person name="Marsh N."/>
            <person name="Miller D.J."/>
            <person name="Lavin M.F."/>
        </authorList>
    </citation>
    <scope>NUCLEOTIDE SEQUENCE [MRNA]</scope>
    <source>
        <tissue>Venom gland</tissue>
    </source>
</reference>
<reference key="2">
    <citation type="journal article" date="2003" name="Biochem. J.">
        <title>Group D prothrombin activators from snake venom are structural homologues of mammalian blood coagulation factor Xa.</title>
        <authorList>
            <person name="Rao V.S."/>
            <person name="Joseph J.S."/>
            <person name="Kini R.M."/>
        </authorList>
    </citation>
    <scope>PROTEIN SEQUENCE OF 41-76 AND 210-235</scope>
    <scope>FUNCTION</scope>
    <scope>SUBUNIT</scope>
    <scope>SUBCELLULAR LOCATION</scope>
    <scope>TISSUE SPECIFICITY</scope>
    <scope>GAMMA-CARBOXYGLUTAMATION AT GLU-46; GLU-47; GLU-54; GLU-56; GLU-59; GLU-60; GLU-65; GLU-66; GLU-69; GLU-72 AND GLU-75</scope>
    <scope>IDENTIFICATION BY MASS SPECTROMETRY</scope>
    <source>
        <tissue>Venom</tissue>
    </source>
</reference>
<reference key="3">
    <citation type="journal article" date="2001" name="Thromb. Haemost.">
        <title>Classification and nomenclature of prothrombin activators isolated from snake venoms.</title>
        <authorList>
            <person name="Manjunatha Kini R."/>
            <person name="Morita T."/>
            <person name="Rosing J."/>
        </authorList>
    </citation>
    <scope>NOMENCLATURE</scope>
</reference>
<dbReference type="EC" id="3.4.21.6"/>
<dbReference type="EMBL" id="AY940206">
    <property type="protein sequence ID" value="AAX37262.1"/>
    <property type="molecule type" value="mRNA"/>
</dbReference>
<dbReference type="SMR" id="Q58L94"/>
<dbReference type="MEROPS" id="S01.425"/>
<dbReference type="GO" id="GO:0005576">
    <property type="term" value="C:extracellular region"/>
    <property type="evidence" value="ECO:0000314"/>
    <property type="project" value="UniProtKB"/>
</dbReference>
<dbReference type="GO" id="GO:0005615">
    <property type="term" value="C:extracellular space"/>
    <property type="evidence" value="ECO:0007669"/>
    <property type="project" value="TreeGrafter"/>
</dbReference>
<dbReference type="GO" id="GO:0005509">
    <property type="term" value="F:calcium ion binding"/>
    <property type="evidence" value="ECO:0007669"/>
    <property type="project" value="InterPro"/>
</dbReference>
<dbReference type="GO" id="GO:0016504">
    <property type="term" value="F:peptidase activator activity"/>
    <property type="evidence" value="ECO:0007669"/>
    <property type="project" value="UniProtKB-KW"/>
</dbReference>
<dbReference type="GO" id="GO:0004252">
    <property type="term" value="F:serine-type endopeptidase activity"/>
    <property type="evidence" value="ECO:0000314"/>
    <property type="project" value="UniProtKB"/>
</dbReference>
<dbReference type="GO" id="GO:0090729">
    <property type="term" value="F:toxin activity"/>
    <property type="evidence" value="ECO:0007669"/>
    <property type="project" value="UniProtKB-KW"/>
</dbReference>
<dbReference type="GO" id="GO:0007596">
    <property type="term" value="P:blood coagulation"/>
    <property type="evidence" value="ECO:0007669"/>
    <property type="project" value="InterPro"/>
</dbReference>
<dbReference type="GO" id="GO:0035807">
    <property type="term" value="P:induction of blood coagulation in another organism"/>
    <property type="evidence" value="ECO:0007669"/>
    <property type="project" value="UniProtKB-ARBA"/>
</dbReference>
<dbReference type="GO" id="GO:0006508">
    <property type="term" value="P:proteolysis"/>
    <property type="evidence" value="ECO:0007669"/>
    <property type="project" value="UniProtKB-KW"/>
</dbReference>
<dbReference type="GO" id="GO:0044469">
    <property type="term" value="P:venom-mediated blood coagulation"/>
    <property type="evidence" value="ECO:0000314"/>
    <property type="project" value="UniProtKB"/>
</dbReference>
<dbReference type="CDD" id="cd00054">
    <property type="entry name" value="EGF_CA"/>
    <property type="match status" value="1"/>
</dbReference>
<dbReference type="CDD" id="cd00190">
    <property type="entry name" value="Tryp_SPc"/>
    <property type="match status" value="1"/>
</dbReference>
<dbReference type="FunFam" id="2.10.25.10:FF:000513">
    <property type="entry name" value="Coagulation factor VII"/>
    <property type="match status" value="1"/>
</dbReference>
<dbReference type="FunFam" id="2.40.10.10:FF:000013">
    <property type="entry name" value="Coagulation factor X"/>
    <property type="match status" value="1"/>
</dbReference>
<dbReference type="FunFam" id="2.10.25.10:FF:000162">
    <property type="entry name" value="Coagulation factor X (Predicted)"/>
    <property type="match status" value="1"/>
</dbReference>
<dbReference type="FunFam" id="4.10.740.10:FF:000001">
    <property type="entry name" value="vitamin K-dependent protein S"/>
    <property type="match status" value="1"/>
</dbReference>
<dbReference type="Gene3D" id="4.10.740.10">
    <property type="entry name" value="Coagulation Factor IX"/>
    <property type="match status" value="1"/>
</dbReference>
<dbReference type="Gene3D" id="2.10.25.10">
    <property type="entry name" value="Laminin"/>
    <property type="match status" value="2"/>
</dbReference>
<dbReference type="Gene3D" id="2.40.10.10">
    <property type="entry name" value="Trypsin-like serine proteases"/>
    <property type="match status" value="2"/>
</dbReference>
<dbReference type="InterPro" id="IPR017857">
    <property type="entry name" value="Coagulation_fac-like_Gla_dom"/>
</dbReference>
<dbReference type="InterPro" id="IPR001881">
    <property type="entry name" value="EGF-like_Ca-bd_dom"/>
</dbReference>
<dbReference type="InterPro" id="IPR000742">
    <property type="entry name" value="EGF-like_dom"/>
</dbReference>
<dbReference type="InterPro" id="IPR000152">
    <property type="entry name" value="EGF-type_Asp/Asn_hydroxyl_site"/>
</dbReference>
<dbReference type="InterPro" id="IPR018097">
    <property type="entry name" value="EGF_Ca-bd_CS"/>
</dbReference>
<dbReference type="InterPro" id="IPR035972">
    <property type="entry name" value="GLA-like_dom_SF"/>
</dbReference>
<dbReference type="InterPro" id="IPR000294">
    <property type="entry name" value="GLA_domain"/>
</dbReference>
<dbReference type="InterPro" id="IPR012224">
    <property type="entry name" value="Pept_S1A_FX"/>
</dbReference>
<dbReference type="InterPro" id="IPR050442">
    <property type="entry name" value="Peptidase_S1_coag_factors"/>
</dbReference>
<dbReference type="InterPro" id="IPR009003">
    <property type="entry name" value="Peptidase_S1_PA"/>
</dbReference>
<dbReference type="InterPro" id="IPR043504">
    <property type="entry name" value="Peptidase_S1_PA_chymotrypsin"/>
</dbReference>
<dbReference type="InterPro" id="IPR001314">
    <property type="entry name" value="Peptidase_S1A"/>
</dbReference>
<dbReference type="InterPro" id="IPR001254">
    <property type="entry name" value="Trypsin_dom"/>
</dbReference>
<dbReference type="InterPro" id="IPR018114">
    <property type="entry name" value="TRYPSIN_HIS"/>
</dbReference>
<dbReference type="InterPro" id="IPR033116">
    <property type="entry name" value="TRYPSIN_SER"/>
</dbReference>
<dbReference type="PANTHER" id="PTHR24278">
    <property type="entry name" value="COAGULATION FACTOR"/>
    <property type="match status" value="1"/>
</dbReference>
<dbReference type="PANTHER" id="PTHR24278:SF28">
    <property type="entry name" value="COAGULATION FACTOR X"/>
    <property type="match status" value="1"/>
</dbReference>
<dbReference type="Pfam" id="PF00008">
    <property type="entry name" value="EGF"/>
    <property type="match status" value="1"/>
</dbReference>
<dbReference type="Pfam" id="PF00594">
    <property type="entry name" value="Gla"/>
    <property type="match status" value="1"/>
</dbReference>
<dbReference type="Pfam" id="PF00089">
    <property type="entry name" value="Trypsin"/>
    <property type="match status" value="1"/>
</dbReference>
<dbReference type="PIRSF" id="PIRSF001143">
    <property type="entry name" value="Factor_X"/>
    <property type="match status" value="1"/>
</dbReference>
<dbReference type="PRINTS" id="PR00722">
    <property type="entry name" value="CHYMOTRYPSIN"/>
</dbReference>
<dbReference type="PRINTS" id="PR00001">
    <property type="entry name" value="GLABLOOD"/>
</dbReference>
<dbReference type="SMART" id="SM00181">
    <property type="entry name" value="EGF"/>
    <property type="match status" value="2"/>
</dbReference>
<dbReference type="SMART" id="SM00179">
    <property type="entry name" value="EGF_CA"/>
    <property type="match status" value="1"/>
</dbReference>
<dbReference type="SMART" id="SM00069">
    <property type="entry name" value="GLA"/>
    <property type="match status" value="1"/>
</dbReference>
<dbReference type="SMART" id="SM00020">
    <property type="entry name" value="Tryp_SPc"/>
    <property type="match status" value="1"/>
</dbReference>
<dbReference type="SUPFAM" id="SSF57630">
    <property type="entry name" value="GLA-domain"/>
    <property type="match status" value="1"/>
</dbReference>
<dbReference type="SUPFAM" id="SSF50494">
    <property type="entry name" value="Trypsin-like serine proteases"/>
    <property type="match status" value="1"/>
</dbReference>
<dbReference type="PROSITE" id="PS00010">
    <property type="entry name" value="ASX_HYDROXYL"/>
    <property type="match status" value="1"/>
</dbReference>
<dbReference type="PROSITE" id="PS00022">
    <property type="entry name" value="EGF_1"/>
    <property type="match status" value="1"/>
</dbReference>
<dbReference type="PROSITE" id="PS50026">
    <property type="entry name" value="EGF_3"/>
    <property type="match status" value="1"/>
</dbReference>
<dbReference type="PROSITE" id="PS01187">
    <property type="entry name" value="EGF_CA"/>
    <property type="match status" value="1"/>
</dbReference>
<dbReference type="PROSITE" id="PS00011">
    <property type="entry name" value="GLA_1"/>
    <property type="match status" value="1"/>
</dbReference>
<dbReference type="PROSITE" id="PS50998">
    <property type="entry name" value="GLA_2"/>
    <property type="match status" value="1"/>
</dbReference>
<dbReference type="PROSITE" id="PS50240">
    <property type="entry name" value="TRYPSIN_DOM"/>
    <property type="match status" value="1"/>
</dbReference>
<dbReference type="PROSITE" id="PS00134">
    <property type="entry name" value="TRYPSIN_HIS"/>
    <property type="match status" value="1"/>
</dbReference>
<dbReference type="PROSITE" id="PS00135">
    <property type="entry name" value="TRYPSIN_SER"/>
    <property type="match status" value="1"/>
</dbReference>
<protein>
    <recommendedName>
        <fullName>Venom prothrombin activator notecarin-D2</fullName>
        <shortName>vPA</shortName>
        <ecNumber>3.4.21.6</ecNumber>
    </recommendedName>
    <alternativeName>
        <fullName>Venom coagulation factor Xa-like protease</fullName>
    </alternativeName>
    <component>
        <recommendedName>
            <fullName>Notecarin-D2 light chain</fullName>
        </recommendedName>
    </component>
    <component>
        <recommendedName>
            <fullName>Notecarin-D2 heavy chain</fullName>
        </recommendedName>
    </component>
</protein>
<sequence length="453" mass="50872">MAPQLLLCLILTFLWSLPEAESNVFLKSKVANRFLQRTKRSNSLFEEIRPGNIERECIEEKCSKEEAREVFEDNEKTETFWNVYVDGDQCSSNPCHYRGTCKDGIGSYTCTCLPNYEGKNCEKVLFKSCRAFNGNCWHFCKRVQSETQCSCAESYLLGVDGHSCVAEGDFSCGRNIKARNKREASLPDFVQSQKATVLKKSDNPSPDIRIVNGMDCKLGECPWQAVLINEKGEVFCGGTILSPIHVLTAAHCINQTKSVSVIVGEIDISRKETRRLLSVDKIYVHKKFVPPNSYYQNIDRFAYDYDIAIIRMKTPIQFSENVVPACLPTADFAKEVLMKQDSGIVSGFGRTQSIGYTSNILKVITVPYVDRHTCMLSSNFRITQNMFCAGYDTLPQDACQGDSGGPHITAYGDTHFVTGIISWGEGCARKGKYGVYTKVSNFIPWIKKIMSLK</sequence>
<keyword id="KW-1204">Blood coagulation cascade activating toxin</keyword>
<keyword id="KW-0106">Calcium</keyword>
<keyword id="KW-0165">Cleavage on pair of basic residues</keyword>
<keyword id="KW-0903">Direct protein sequencing</keyword>
<keyword id="KW-1015">Disulfide bond</keyword>
<keyword id="KW-0245">EGF-like domain</keyword>
<keyword id="KW-0301">Gamma-carboxyglutamic acid</keyword>
<keyword id="KW-0325">Glycoprotein</keyword>
<keyword id="KW-1199">Hemostasis impairing toxin</keyword>
<keyword id="KW-0378">Hydrolase</keyword>
<keyword id="KW-0645">Protease</keyword>
<keyword id="KW-0655">Prothrombin activator</keyword>
<keyword id="KW-0677">Repeat</keyword>
<keyword id="KW-0964">Secreted</keyword>
<keyword id="KW-0720">Serine protease</keyword>
<keyword id="KW-0732">Signal</keyword>
<keyword id="KW-0800">Toxin</keyword>
<feature type="signal peptide" evidence="2">
    <location>
        <begin position="1"/>
        <end position="20"/>
    </location>
</feature>
<feature type="propeptide" id="PRO_0000409893" evidence="1">
    <location>
        <begin position="21"/>
        <end position="40"/>
    </location>
</feature>
<feature type="chain" id="PRO_5000095352" description="Notecarin-D2 light chain">
    <location>
        <begin position="41"/>
        <end position="181"/>
    </location>
</feature>
<feature type="propeptide" id="PRO_5000095353" description="Activation peptide" evidence="1">
    <location>
        <begin position="182"/>
        <end position="209"/>
    </location>
</feature>
<feature type="chain" id="PRO_5000095354" description="Notecarin-D2 heavy chain">
    <location>
        <begin position="210"/>
        <end position="453"/>
    </location>
</feature>
<feature type="domain" description="Gla" evidence="5">
    <location>
        <begin position="41"/>
        <end position="86"/>
    </location>
</feature>
<feature type="domain" description="EGF-like 1; calcium-binding" evidence="3">
    <location>
        <begin position="86"/>
        <end position="122"/>
    </location>
</feature>
<feature type="domain" description="EGF-like 2" evidence="3">
    <location>
        <begin position="129"/>
        <end position="164"/>
    </location>
</feature>
<feature type="domain" description="Peptidase S1" evidence="4">
    <location>
        <begin position="210"/>
        <end position="451"/>
    </location>
</feature>
<feature type="active site" description="Charge relay system" evidence="1">
    <location>
        <position position="251"/>
    </location>
</feature>
<feature type="active site" description="Charge relay system" evidence="1">
    <location>
        <position position="306"/>
    </location>
</feature>
<feature type="active site" description="Charge relay system" evidence="1">
    <location>
        <position position="403"/>
    </location>
</feature>
<feature type="modified residue" description="4-carboxyglutamate" evidence="5 6">
    <location>
        <position position="46"/>
    </location>
</feature>
<feature type="modified residue" description="4-carboxyglutamate" evidence="5 6">
    <location>
        <position position="47"/>
    </location>
</feature>
<feature type="modified residue" description="4-carboxyglutamate" evidence="5 6">
    <location>
        <position position="54"/>
    </location>
</feature>
<feature type="modified residue" description="4-carboxyglutamate" evidence="5 6">
    <location>
        <position position="56"/>
    </location>
</feature>
<feature type="modified residue" description="4-carboxyglutamate" evidence="5 6">
    <location>
        <position position="59"/>
    </location>
</feature>
<feature type="modified residue" description="4-carboxyglutamate" evidence="5 6">
    <location>
        <position position="60"/>
    </location>
</feature>
<feature type="modified residue" description="4-carboxyglutamate" evidence="5 6">
    <location>
        <position position="65"/>
    </location>
</feature>
<feature type="modified residue" description="4-carboxyglutamate" evidence="5 6">
    <location>
        <position position="66"/>
    </location>
</feature>
<feature type="modified residue" description="4-carboxyglutamate" evidence="5 6">
    <location>
        <position position="69"/>
    </location>
</feature>
<feature type="modified residue" description="4-carboxyglutamate" evidence="5 6">
    <location>
        <position position="72"/>
    </location>
</feature>
<feature type="modified residue" description="4-carboxyglutamate" evidence="5 6">
    <location>
        <position position="75"/>
    </location>
</feature>
<feature type="glycosylation site" description="O-linked (Hex...) serine" evidence="1">
    <location>
        <position position="92"/>
    </location>
</feature>
<feature type="glycosylation site" description="N-linked (GlcNAc...) asparagine" evidence="2">
    <location>
        <position position="254"/>
    </location>
</feature>
<feature type="disulfide bond" evidence="1">
    <location>
        <begin position="57"/>
        <end position="62"/>
    </location>
</feature>
<feature type="disulfide bond" evidence="1">
    <location>
        <begin position="90"/>
        <end position="101"/>
    </location>
</feature>
<feature type="disulfide bond" evidence="1">
    <location>
        <begin position="95"/>
        <end position="110"/>
    </location>
</feature>
<feature type="disulfide bond" evidence="1">
    <location>
        <begin position="112"/>
        <end position="121"/>
    </location>
</feature>
<feature type="disulfide bond" evidence="1">
    <location>
        <begin position="129"/>
        <end position="140"/>
    </location>
</feature>
<feature type="disulfide bond" evidence="1">
    <location>
        <begin position="136"/>
        <end position="149"/>
    </location>
</feature>
<feature type="disulfide bond" evidence="1">
    <location>
        <begin position="151"/>
        <end position="164"/>
    </location>
</feature>
<feature type="disulfide bond" description="Interchain (between light and heavy chains)" evidence="3 4 5">
    <location>
        <begin position="172"/>
        <end position="326"/>
    </location>
</feature>
<feature type="disulfide bond" evidence="1">
    <location>
        <begin position="216"/>
        <end position="221"/>
    </location>
</feature>
<feature type="disulfide bond" evidence="1">
    <location>
        <begin position="236"/>
        <end position="252"/>
    </location>
</feature>
<feature type="disulfide bond" evidence="1">
    <location>
        <begin position="374"/>
        <end position="388"/>
    </location>
</feature>
<feature type="disulfide bond" evidence="1">
    <location>
        <begin position="399"/>
        <end position="427"/>
    </location>
</feature>
<evidence type="ECO:0000250" key="1"/>
<evidence type="ECO:0000255" key="2"/>
<evidence type="ECO:0000255" key="3">
    <source>
        <dbReference type="PROSITE-ProRule" id="PRU00076"/>
    </source>
</evidence>
<evidence type="ECO:0000255" key="4">
    <source>
        <dbReference type="PROSITE-ProRule" id="PRU00274"/>
    </source>
</evidence>
<evidence type="ECO:0000255" key="5">
    <source>
        <dbReference type="PROSITE-ProRule" id="PRU00463"/>
    </source>
</evidence>
<evidence type="ECO:0000269" key="6">
    <source>
    </source>
</evidence>